<reference evidence="13 20" key="1">
    <citation type="journal article" date="1998" name="Oncogene">
        <title>Identification of a novel cDNA, encoding a cytoskeletal associated protein, differentially expressed in diffuse large B-cell lymphomas.</title>
        <authorList>
            <person name="Maouche-Chretien L."/>
            <person name="Deleu N."/>
            <person name="Badoual C."/>
            <person name="Fraissignes P."/>
            <person name="Berger R."/>
            <person name="Gaulard P."/>
            <person name="Romeo P.H."/>
            <person name="Leroy-Viard K."/>
        </authorList>
    </citation>
    <scope>NUCLEOTIDE SEQUENCE [MRNA] (ISOFORM 1)</scope>
    <scope>SUBCELLULAR LOCATION</scope>
    <scope>TISSUE SPECIFICITY</scope>
    <scope>VARIANT VAL-323</scope>
    <source>
        <tissue evidence="20">T-cell</tissue>
    </source>
</reference>
<reference evidence="13 21" key="2">
    <citation type="journal article" date="2001" name="Genetika">
        <title>Evolutionarily-conserved gene CKAP2, located in region 13q14.3 of the human genome, is frequently rearranged in various tumors.</title>
        <authorList>
            <person name="Udina I.G."/>
            <person name="Baranova A.V."/>
            <person name="Kompaniytsev A.A."/>
            <person name="Sulimova G.E."/>
        </authorList>
    </citation>
    <scope>NUCLEOTIDE SEQUENCE [GENOMIC DNA] (ISOFORM 1)</scope>
</reference>
<reference evidence="13 17" key="3">
    <citation type="journal article" date="2003" name="J. Cancer Res. Clin. Oncol.">
        <title>Up-regulation of cytoskeletal-associated protein 2 in primary human gastric adenocarcinomas.</title>
        <authorList>
            <person name="Bae C.-D."/>
            <person name="Sung Y.-S."/>
            <person name="Jeon S.-M."/>
            <person name="Suh Y."/>
            <person name="Yang H.-K."/>
            <person name="Kim Y.-I."/>
            <person name="Park K.-H."/>
            <person name="Choi J."/>
            <person name="Ahn G."/>
            <person name="Park J."/>
        </authorList>
    </citation>
    <scope>NUCLEOTIDE SEQUENCE [MRNA] (ISOFORMS 2 AND 3)</scope>
    <scope>SUBCELLULAR LOCATION</scope>
    <scope>INDUCTION</scope>
    <source>
        <tissue evidence="17">Cervix carcinoma</tissue>
    </source>
</reference>
<reference evidence="13 18" key="4">
    <citation type="journal article" date="2004" name="Nat. Genet.">
        <title>Complete sequencing and characterization of 21,243 full-length human cDNAs.</title>
        <authorList>
            <person name="Ota T."/>
            <person name="Suzuki Y."/>
            <person name="Nishikawa T."/>
            <person name="Otsuki T."/>
            <person name="Sugiyama T."/>
            <person name="Irie R."/>
            <person name="Wakamatsu A."/>
            <person name="Hayashi K."/>
            <person name="Sato H."/>
            <person name="Nagai K."/>
            <person name="Kimura K."/>
            <person name="Makita H."/>
            <person name="Sekine M."/>
            <person name="Obayashi M."/>
            <person name="Nishi T."/>
            <person name="Shibahara T."/>
            <person name="Tanaka T."/>
            <person name="Ishii S."/>
            <person name="Yamamoto J."/>
            <person name="Saito K."/>
            <person name="Kawai Y."/>
            <person name="Isono Y."/>
            <person name="Nakamura Y."/>
            <person name="Nagahari K."/>
            <person name="Murakami K."/>
            <person name="Yasuda T."/>
            <person name="Iwayanagi T."/>
            <person name="Wagatsuma M."/>
            <person name="Shiratori A."/>
            <person name="Sudo H."/>
            <person name="Hosoiri T."/>
            <person name="Kaku Y."/>
            <person name="Kodaira H."/>
            <person name="Kondo H."/>
            <person name="Sugawara M."/>
            <person name="Takahashi M."/>
            <person name="Kanda K."/>
            <person name="Yokoi T."/>
            <person name="Furuya T."/>
            <person name="Kikkawa E."/>
            <person name="Omura Y."/>
            <person name="Abe K."/>
            <person name="Kamihara K."/>
            <person name="Katsuta N."/>
            <person name="Sato K."/>
            <person name="Tanikawa M."/>
            <person name="Yamazaki M."/>
            <person name="Ninomiya K."/>
            <person name="Ishibashi T."/>
            <person name="Yamashita H."/>
            <person name="Murakawa K."/>
            <person name="Fujimori K."/>
            <person name="Tanai H."/>
            <person name="Kimata M."/>
            <person name="Watanabe M."/>
            <person name="Hiraoka S."/>
            <person name="Chiba Y."/>
            <person name="Ishida S."/>
            <person name="Ono Y."/>
            <person name="Takiguchi S."/>
            <person name="Watanabe S."/>
            <person name="Yosida M."/>
            <person name="Hotuta T."/>
            <person name="Kusano J."/>
            <person name="Kanehori K."/>
            <person name="Takahashi-Fujii A."/>
            <person name="Hara H."/>
            <person name="Tanase T.-O."/>
            <person name="Nomura Y."/>
            <person name="Togiya S."/>
            <person name="Komai F."/>
            <person name="Hara R."/>
            <person name="Takeuchi K."/>
            <person name="Arita M."/>
            <person name="Imose N."/>
            <person name="Musashino K."/>
            <person name="Yuuki H."/>
            <person name="Oshima A."/>
            <person name="Sasaki N."/>
            <person name="Aotsuka S."/>
            <person name="Yoshikawa Y."/>
            <person name="Matsunawa H."/>
            <person name="Ichihara T."/>
            <person name="Shiohata N."/>
            <person name="Sano S."/>
            <person name="Moriya S."/>
            <person name="Momiyama H."/>
            <person name="Satoh N."/>
            <person name="Takami S."/>
            <person name="Terashima Y."/>
            <person name="Suzuki O."/>
            <person name="Nakagawa S."/>
            <person name="Senoh A."/>
            <person name="Mizoguchi H."/>
            <person name="Goto Y."/>
            <person name="Shimizu F."/>
            <person name="Wakebe H."/>
            <person name="Hishigaki H."/>
            <person name="Watanabe T."/>
            <person name="Sugiyama A."/>
            <person name="Takemoto M."/>
            <person name="Kawakami B."/>
            <person name="Yamazaki M."/>
            <person name="Watanabe K."/>
            <person name="Kumagai A."/>
            <person name="Itakura S."/>
            <person name="Fukuzumi Y."/>
            <person name="Fujimori Y."/>
            <person name="Komiyama M."/>
            <person name="Tashiro H."/>
            <person name="Tanigami A."/>
            <person name="Fujiwara T."/>
            <person name="Ono T."/>
            <person name="Yamada K."/>
            <person name="Fujii Y."/>
            <person name="Ozaki K."/>
            <person name="Hirao M."/>
            <person name="Ohmori Y."/>
            <person name="Kawabata A."/>
            <person name="Hikiji T."/>
            <person name="Kobatake N."/>
            <person name="Inagaki H."/>
            <person name="Ikema Y."/>
            <person name="Okamoto S."/>
            <person name="Okitani R."/>
            <person name="Kawakami T."/>
            <person name="Noguchi S."/>
            <person name="Itoh T."/>
            <person name="Shigeta K."/>
            <person name="Senba T."/>
            <person name="Matsumura K."/>
            <person name="Nakajima Y."/>
            <person name="Mizuno T."/>
            <person name="Morinaga M."/>
            <person name="Sasaki M."/>
            <person name="Togashi T."/>
            <person name="Oyama M."/>
            <person name="Hata H."/>
            <person name="Watanabe M."/>
            <person name="Komatsu T."/>
            <person name="Mizushima-Sugano J."/>
            <person name="Satoh T."/>
            <person name="Shirai Y."/>
            <person name="Takahashi Y."/>
            <person name="Nakagawa K."/>
            <person name="Okumura K."/>
            <person name="Nagase T."/>
            <person name="Nomura N."/>
            <person name="Kikuchi H."/>
            <person name="Masuho Y."/>
            <person name="Yamashita R."/>
            <person name="Nakai K."/>
            <person name="Yada T."/>
            <person name="Nakamura Y."/>
            <person name="Ohara O."/>
            <person name="Isogai T."/>
            <person name="Sugano S."/>
        </authorList>
    </citation>
    <scope>NUCLEOTIDE SEQUENCE [LARGE SCALE MRNA] (ISOFORMS 3 AND 4)</scope>
    <scope>VARIANT VAL-323</scope>
    <source>
        <tissue evidence="18">Teratocarcinoma</tissue>
    </source>
</reference>
<reference key="5">
    <citation type="journal article" date="2007" name="BMC Genomics">
        <title>The full-ORF clone resource of the German cDNA consortium.</title>
        <authorList>
            <person name="Bechtel S."/>
            <person name="Rosenfelder H."/>
            <person name="Duda A."/>
            <person name="Schmidt C.P."/>
            <person name="Ernst U."/>
            <person name="Wellenreuther R."/>
            <person name="Mehrle A."/>
            <person name="Schuster C."/>
            <person name="Bahr A."/>
            <person name="Bloecker H."/>
            <person name="Heubner D."/>
            <person name="Hoerlein A."/>
            <person name="Michel G."/>
            <person name="Wedler H."/>
            <person name="Koehrer K."/>
            <person name="Ottenwaelder B."/>
            <person name="Poustka A."/>
            <person name="Wiemann S."/>
            <person name="Schupp I."/>
        </authorList>
    </citation>
    <scope>NUCLEOTIDE SEQUENCE [LARGE SCALE MRNA] (ISOFORM 1)</scope>
    <source>
        <tissue>Testis</tissue>
    </source>
</reference>
<reference evidence="13" key="6">
    <citation type="journal article" date="2004" name="Nature">
        <title>The DNA sequence and analysis of human chromosome 13.</title>
        <authorList>
            <person name="Dunham A."/>
            <person name="Matthews L.H."/>
            <person name="Burton J."/>
            <person name="Ashurst J.L."/>
            <person name="Howe K.L."/>
            <person name="Ashcroft K.J."/>
            <person name="Beare D.M."/>
            <person name="Burford D.C."/>
            <person name="Hunt S.E."/>
            <person name="Griffiths-Jones S."/>
            <person name="Jones M.C."/>
            <person name="Keenan S.J."/>
            <person name="Oliver K."/>
            <person name="Scott C.E."/>
            <person name="Ainscough R."/>
            <person name="Almeida J.P."/>
            <person name="Ambrose K.D."/>
            <person name="Andrews D.T."/>
            <person name="Ashwell R.I.S."/>
            <person name="Babbage A.K."/>
            <person name="Bagguley C.L."/>
            <person name="Bailey J."/>
            <person name="Bannerjee R."/>
            <person name="Barlow K.F."/>
            <person name="Bates K."/>
            <person name="Beasley H."/>
            <person name="Bird C.P."/>
            <person name="Bray-Allen S."/>
            <person name="Brown A.J."/>
            <person name="Brown J.Y."/>
            <person name="Burrill W."/>
            <person name="Carder C."/>
            <person name="Carter N.P."/>
            <person name="Chapman J.C."/>
            <person name="Clamp M.E."/>
            <person name="Clark S.Y."/>
            <person name="Clarke G."/>
            <person name="Clee C.M."/>
            <person name="Clegg S.C."/>
            <person name="Cobley V."/>
            <person name="Collins J.E."/>
            <person name="Corby N."/>
            <person name="Coville G.J."/>
            <person name="Deloukas P."/>
            <person name="Dhami P."/>
            <person name="Dunham I."/>
            <person name="Dunn M."/>
            <person name="Earthrowl M.E."/>
            <person name="Ellington A.G."/>
            <person name="Faulkner L."/>
            <person name="Frankish A.G."/>
            <person name="Frankland J."/>
            <person name="French L."/>
            <person name="Garner P."/>
            <person name="Garnett J."/>
            <person name="Gilbert J.G.R."/>
            <person name="Gilson C.J."/>
            <person name="Ghori J."/>
            <person name="Grafham D.V."/>
            <person name="Gribble S.M."/>
            <person name="Griffiths C."/>
            <person name="Hall R.E."/>
            <person name="Hammond S."/>
            <person name="Harley J.L."/>
            <person name="Hart E.A."/>
            <person name="Heath P.D."/>
            <person name="Howden P.J."/>
            <person name="Huckle E.J."/>
            <person name="Hunt P.J."/>
            <person name="Hunt A.R."/>
            <person name="Johnson C."/>
            <person name="Johnson D."/>
            <person name="Kay M."/>
            <person name="Kimberley A.M."/>
            <person name="King A."/>
            <person name="Laird G.K."/>
            <person name="Langford C.J."/>
            <person name="Lawlor S."/>
            <person name="Leongamornlert D.A."/>
            <person name="Lloyd D.M."/>
            <person name="Lloyd C."/>
            <person name="Loveland J.E."/>
            <person name="Lovell J."/>
            <person name="Martin S."/>
            <person name="Mashreghi-Mohammadi M."/>
            <person name="McLaren S.J."/>
            <person name="McMurray A."/>
            <person name="Milne S."/>
            <person name="Moore M.J.F."/>
            <person name="Nickerson T."/>
            <person name="Palmer S.A."/>
            <person name="Pearce A.V."/>
            <person name="Peck A.I."/>
            <person name="Pelan S."/>
            <person name="Phillimore B."/>
            <person name="Porter K.M."/>
            <person name="Rice C.M."/>
            <person name="Searle S."/>
            <person name="Sehra H.K."/>
            <person name="Shownkeen R."/>
            <person name="Skuce C.D."/>
            <person name="Smith M."/>
            <person name="Steward C.A."/>
            <person name="Sycamore N."/>
            <person name="Tester J."/>
            <person name="Thomas D.W."/>
            <person name="Tracey A."/>
            <person name="Tromans A."/>
            <person name="Tubby B."/>
            <person name="Wall M."/>
            <person name="Wallis J.M."/>
            <person name="West A.P."/>
            <person name="Whitehead S.L."/>
            <person name="Willey D.L."/>
            <person name="Wilming L."/>
            <person name="Wray P.W."/>
            <person name="Wright M.W."/>
            <person name="Young L."/>
            <person name="Coulson A."/>
            <person name="Durbin R.M."/>
            <person name="Hubbard T."/>
            <person name="Sulston J.E."/>
            <person name="Beck S."/>
            <person name="Bentley D.R."/>
            <person name="Rogers J."/>
            <person name="Ross M.T."/>
        </authorList>
    </citation>
    <scope>NUCLEOTIDE SEQUENCE [LARGE SCALE GENOMIC DNA]</scope>
</reference>
<reference evidence="13 15" key="7">
    <citation type="journal article" date="2004" name="Genome Res.">
        <title>The status, quality, and expansion of the NIH full-length cDNA project: the Mammalian Gene Collection (MGC).</title>
        <authorList>
            <consortium name="The MGC Project Team"/>
        </authorList>
    </citation>
    <scope>NUCLEOTIDE SEQUENCE [LARGE SCALE MRNA] (ISOFORM 3)</scope>
    <scope>VARIANT VAL-323</scope>
    <source>
        <tissue evidence="15">Bone marrow</tissue>
        <tissue>Cerebellum</tissue>
        <tissue evidence="16">Testis</tissue>
    </source>
</reference>
<reference evidence="13 14" key="8">
    <citation type="journal article" date="2001" name="Proc. Natl. Acad. Sci. U.S.A.">
        <title>Serological detection of cutaneous T-cell lymphoma-associated antigens.</title>
        <authorList>
            <person name="Eichmueller S."/>
            <person name="Usener D."/>
            <person name="Dummer R."/>
            <person name="Stein A."/>
            <person name="Thiel D."/>
            <person name="Schadendorf D."/>
        </authorList>
    </citation>
    <scope>NUCLEOTIDE SEQUENCE [MRNA] OF 38-683 (ISOFORM 1)</scope>
    <scope>VARIANTS LYS-236 AND VAL-323</scope>
    <source>
        <tissue evidence="14">Testis</tissue>
    </source>
</reference>
<reference evidence="13 19" key="9">
    <citation type="journal article" date="2001" name="Genome Res.">
        <title>Towards a catalog of human genes and proteins: sequencing and analysis of 500 novel complete protein coding human cDNAs.</title>
        <authorList>
            <person name="Wiemann S."/>
            <person name="Weil B."/>
            <person name="Wellenreuther R."/>
            <person name="Gassenhuber J."/>
            <person name="Glassl S."/>
            <person name="Ansorge W."/>
            <person name="Boecher M."/>
            <person name="Bloecker H."/>
            <person name="Bauersachs S."/>
            <person name="Blum H."/>
            <person name="Lauber J."/>
            <person name="Duesterhoeft A."/>
            <person name="Beyer A."/>
            <person name="Koehrer K."/>
            <person name="Strack N."/>
            <person name="Mewes H.-W."/>
            <person name="Ottenwaelder B."/>
            <person name="Obermaier B."/>
            <person name="Tampe J."/>
            <person name="Heubner D."/>
            <person name="Wambutt R."/>
            <person name="Korn B."/>
            <person name="Klein M."/>
            <person name="Poustka A."/>
        </authorList>
    </citation>
    <scope>NUCLEOTIDE SEQUENCE [LARGE SCALE MRNA] OF 135-683 (ISOFORM 1)</scope>
    <scope>VARIANT VAL-323</scope>
    <source>
        <tissue evidence="19">Testis</tissue>
    </source>
</reference>
<reference key="10">
    <citation type="journal article" date="2007" name="J. Biol. Chem.">
        <title>CKAP2 is a spindle-associated protein degraded by APC/C-Cdh1 during mitotic exit.</title>
        <authorList>
            <person name="Seki A."/>
            <person name="Fang G."/>
        </authorList>
    </citation>
    <scope>SUBCELLULAR LOCATION</scope>
    <scope>DEVELOPMENTAL STAGE</scope>
</reference>
<reference key="11">
    <citation type="journal article" date="2008" name="Proc. Natl. Acad. Sci. U.S.A.">
        <title>A quantitative atlas of mitotic phosphorylation.</title>
        <authorList>
            <person name="Dephoure N."/>
            <person name="Zhou C."/>
            <person name="Villen J."/>
            <person name="Beausoleil S.A."/>
            <person name="Bakalarski C.E."/>
            <person name="Elledge S.J."/>
            <person name="Gygi S.P."/>
        </authorList>
    </citation>
    <scope>PHOSPHORYLATION [LARGE SCALE ANALYSIS] AT THR-579; THR-582; SER-595; THR-596; THR-597; TYR-599 AND SER-602</scope>
    <scope>IDENTIFICATION BY MASS SPECTROMETRY [LARGE SCALE ANALYSIS]</scope>
    <source>
        <tissue>Cervix carcinoma</tissue>
    </source>
</reference>
<reference key="12">
    <citation type="journal article" date="2009" name="Sci. Signal.">
        <title>Quantitative phosphoproteomic analysis of T cell receptor signaling reveals system-wide modulation of protein-protein interactions.</title>
        <authorList>
            <person name="Mayya V."/>
            <person name="Lundgren D.H."/>
            <person name="Hwang S.-I."/>
            <person name="Rezaul K."/>
            <person name="Wu L."/>
            <person name="Eng J.K."/>
            <person name="Rodionov V."/>
            <person name="Han D.K."/>
        </authorList>
    </citation>
    <scope>PHOSPHORYLATION [LARGE SCALE ANALYSIS] AT THR-597 AND SER-602</scope>
    <scope>IDENTIFICATION BY MASS SPECTROMETRY [LARGE SCALE ANALYSIS]</scope>
    <source>
        <tissue>Leukemic T-cell</tissue>
    </source>
</reference>
<reference key="13">
    <citation type="journal article" date="2010" name="Sci. Signal.">
        <title>Quantitative phosphoproteomics reveals widespread full phosphorylation site occupancy during mitosis.</title>
        <authorList>
            <person name="Olsen J.V."/>
            <person name="Vermeulen M."/>
            <person name="Santamaria A."/>
            <person name="Kumar C."/>
            <person name="Miller M.L."/>
            <person name="Jensen L.J."/>
            <person name="Gnad F."/>
            <person name="Cox J."/>
            <person name="Jensen T.S."/>
            <person name="Nigg E.A."/>
            <person name="Brunak S."/>
            <person name="Mann M."/>
        </authorList>
    </citation>
    <scope>PHOSPHORYLATION [LARGE SCALE ANALYSIS] AT SER-534; SER-595; THR-597 AND SER-602</scope>
    <scope>IDENTIFICATION BY MASS SPECTROMETRY [LARGE SCALE ANALYSIS]</scope>
    <source>
        <tissue>Cervix carcinoma</tissue>
    </source>
</reference>
<reference key="14">
    <citation type="journal article" date="2011" name="BMC Syst. Biol.">
        <title>Initial characterization of the human central proteome.</title>
        <authorList>
            <person name="Burkard T.R."/>
            <person name="Planyavsky M."/>
            <person name="Kaupe I."/>
            <person name="Breitwieser F.P."/>
            <person name="Buerckstuemmer T."/>
            <person name="Bennett K.L."/>
            <person name="Superti-Furga G."/>
            <person name="Colinge J."/>
        </authorList>
    </citation>
    <scope>IDENTIFICATION BY MASS SPECTROMETRY [LARGE SCALE ANALYSIS]</scope>
</reference>
<reference key="15">
    <citation type="journal article" date="2013" name="J. Proteome Res.">
        <title>Toward a comprehensive characterization of a human cancer cell phosphoproteome.</title>
        <authorList>
            <person name="Zhou H."/>
            <person name="Di Palma S."/>
            <person name="Preisinger C."/>
            <person name="Peng M."/>
            <person name="Polat A.N."/>
            <person name="Heck A.J."/>
            <person name="Mohammed S."/>
        </authorList>
    </citation>
    <scope>PHOSPHORYLATION [LARGE SCALE ANALYSIS] AT SER-178 AND SER-190</scope>
    <scope>IDENTIFICATION BY MASS SPECTROMETRY [LARGE SCALE ANALYSIS]</scope>
    <source>
        <tissue>Erythroleukemia</tissue>
    </source>
</reference>
<gene>
    <name evidence="22" type="primary">CKAP2</name>
    <name evidence="20" type="synonym">LB1</name>
    <name evidence="17" type="synonym">TMAP</name>
</gene>
<feature type="chain" id="PRO_0000245774" description="Cytoskeleton-associated protein 2">
    <location>
        <begin position="1"/>
        <end position="683"/>
    </location>
</feature>
<feature type="region of interest" description="Disordered" evidence="2">
    <location>
        <begin position="1"/>
        <end position="28"/>
    </location>
</feature>
<feature type="region of interest" description="Disordered" evidence="2">
    <location>
        <begin position="153"/>
        <end position="175"/>
    </location>
</feature>
<feature type="region of interest" description="Disordered" evidence="2">
    <location>
        <begin position="214"/>
        <end position="236"/>
    </location>
</feature>
<feature type="region of interest" description="Disordered" evidence="2">
    <location>
        <begin position="336"/>
        <end position="403"/>
    </location>
</feature>
<feature type="compositionally biased region" description="Polar residues" evidence="2">
    <location>
        <begin position="219"/>
        <end position="236"/>
    </location>
</feature>
<feature type="compositionally biased region" description="Basic and acidic residues" evidence="2">
    <location>
        <begin position="336"/>
        <end position="345"/>
    </location>
</feature>
<feature type="compositionally biased region" description="Basic and acidic residues" evidence="2">
    <location>
        <begin position="362"/>
        <end position="376"/>
    </location>
</feature>
<feature type="modified residue" description="Phosphoserine" evidence="26">
    <location>
        <position position="178"/>
    </location>
</feature>
<feature type="modified residue" description="Phosphoserine" evidence="26">
    <location>
        <position position="190"/>
    </location>
</feature>
<feature type="modified residue" description="Phosphoserine" evidence="25">
    <location>
        <position position="534"/>
    </location>
</feature>
<feature type="modified residue" description="Phosphothreonine" evidence="23">
    <location>
        <position position="579"/>
    </location>
</feature>
<feature type="modified residue" description="Phosphothreonine" evidence="23">
    <location>
        <position position="582"/>
    </location>
</feature>
<feature type="modified residue" description="Phosphoserine" evidence="23 25">
    <location>
        <position position="595"/>
    </location>
</feature>
<feature type="modified residue" description="Phosphothreonine" evidence="23">
    <location>
        <position position="596"/>
    </location>
</feature>
<feature type="modified residue" description="Phosphothreonine" evidence="23 24 25">
    <location>
        <position position="597"/>
    </location>
</feature>
<feature type="modified residue" description="Phosphotyrosine" evidence="23">
    <location>
        <position position="599"/>
    </location>
</feature>
<feature type="modified residue" description="Phosphoserine" evidence="23 24 25">
    <location>
        <position position="602"/>
    </location>
</feature>
<feature type="splice variant" id="VSP_055686" description="In isoform 4." evidence="11">
    <original>MSTPAVPQDLQLPPSQRAQSAFKEQRRQKLKEHLLRRKTLFAYKQENEMLS</original>
    <variation>ML</variation>
    <location>
        <begin position="1"/>
        <end position="51"/>
    </location>
</feature>
<feature type="splice variant" id="VSP_047100" description="In isoform 2 and isoform 3." evidence="10 11 12">
    <location>
        <position position="53"/>
    </location>
</feature>
<feature type="splice variant" id="VSP_047101" description="In isoform 2." evidence="10">
    <original>PI</original>
    <variation>VR</variation>
    <location>
        <begin position="494"/>
        <end position="495"/>
    </location>
</feature>
<feature type="splice variant" id="VSP_047102" description="In isoform 2." evidence="10">
    <location>
        <begin position="496"/>
        <end position="683"/>
    </location>
</feature>
<feature type="sequence variant" id="VAR_054018" description="In dbSNP:rs35975899." evidence="3">
    <original>M</original>
    <variation>K</variation>
    <location>
        <position position="236"/>
    </location>
</feature>
<feature type="sequence variant" id="VAR_069359" description="In dbSNP:rs7335867." evidence="3 4 6 7 9">
    <original>I</original>
    <variation>V</variation>
    <location>
        <position position="323"/>
    </location>
</feature>
<feature type="sequence conflict" description="In Ref. 9; CAB66782." evidence="13" ref="9">
    <original>P</original>
    <variation>L</variation>
    <location>
        <position position="402"/>
    </location>
</feature>
<feature type="sequence conflict" description="In Ref. 4; BAA91788." evidence="13" ref="4">
    <original>K</original>
    <variation>Q</variation>
    <location>
        <position position="531"/>
    </location>
</feature>
<feature type="sequence conflict" description="In Ref. 4; BAB14345." evidence="13" ref="4">
    <original>K</original>
    <variation>R</variation>
    <location>
        <position position="531"/>
    </location>
</feature>
<feature type="sequence conflict" description="In Ref. 4; BAB14345." evidence="13" ref="4">
    <original>F</original>
    <variation>L</variation>
    <location>
        <position position="559"/>
    </location>
</feature>
<feature type="sequence conflict" description="In Ref. 4; BAB14345." evidence="13" ref="4">
    <original>V</original>
    <variation>A</variation>
    <location>
        <position position="577"/>
    </location>
</feature>
<feature type="sequence conflict" description="In Ref. 4; BAA91788." evidence="13" ref="4">
    <original>K</original>
    <variation>R</variation>
    <location>
        <position position="643"/>
    </location>
</feature>
<comment type="function">
    <text evidence="1">Possesses microtubule stabilizing properties. Involved in regulating aneuploidy, cell cycling, and cell death in a p53/TP53-dependent manner (By similarity).</text>
</comment>
<comment type="subunit">
    <text evidence="1">Associates with alpha- and beta-tubulins.</text>
</comment>
<comment type="subcellular location">
    <subcellularLocation>
        <location>Cytoplasm</location>
        <location>Cytoskeleton</location>
    </subcellularLocation>
    <subcellularLocation>
        <location>Cytoplasm</location>
        <location>Cytoskeleton</location>
        <location>Spindle</location>
    </subcellularLocation>
    <subcellularLocation>
        <location>Cytoplasm</location>
        <location>Cytoskeleton</location>
        <location>Spindle pole</location>
    </subcellularLocation>
    <text>Contrary to the ectopically expressed protein, endogenous CKAP2 does not colocalize with microtubules in G1, S and early G2. At late G2 and prophase after separation of duplicated centrosomes, colocalizes with gamma-tubulin and centrosome-proximal microtubules. From prometaphase through anaphase B, colocalizes with mitotic spindle poles and spindle microtubules. During cytokinesis, absent from midbody microtubules.</text>
</comment>
<comment type="alternative products">
    <event type="alternative splicing"/>
    <isoform>
        <id>Q8WWK9-1</id>
        <name evidence="3 5 9">1</name>
        <sequence type="displayed"/>
    </isoform>
    <isoform>
        <id>Q8WWK9-4</id>
        <name>2</name>
        <sequence type="described" ref="VSP_047100 VSP_047101 VSP_047102"/>
    </isoform>
    <isoform>
        <id>Q8WWK9-6</id>
        <name>4</name>
        <sequence type="described" ref="VSP_055686"/>
    </isoform>
    <isoform>
        <id>Q8WWK9-5</id>
        <name>3</name>
        <sequence type="described" ref="VSP_047100"/>
    </isoform>
</comment>
<comment type="tissue specificity">
    <text evidence="9">Abundant in testis, thymus, and in tumor derived cell lines, while barely detectable in liver, prostate, and kidney.</text>
</comment>
<comment type="developmental stage">
    <text evidence="8">Present at the G1/S boundary. Accumulates as cells progress from S to G2 into mitosis. Rapidly degraded during mitosis exit by CDH1-activated anaphase promoting complex/cyclosome (APC/C).</text>
</comment>
<comment type="induction">
    <text evidence="5">Up-regulated in primary human gastric cancers.</text>
</comment>
<comment type="similarity">
    <text evidence="13">Belongs to the CKAP2 family.</text>
</comment>
<comment type="sequence caution" evidence="13">
    <conflict type="frameshift">
        <sequence resource="EMBL-CDS" id="AAG33675"/>
    </conflict>
</comment>
<comment type="sequence caution" evidence="13">
    <conflict type="erroneous initiation">
        <sequence resource="EMBL-CDS" id="AAH10901"/>
    </conflict>
    <text>Truncated N-terminus.</text>
</comment>
<comment type="sequence caution" evidence="13">
    <conflict type="miscellaneous discrepancy">
        <sequence resource="EMBL-CDS" id="AAI05807"/>
    </conflict>
    <text>Contaminating sequence. Potential poly-A sequence.</text>
</comment>
<comment type="sequence caution" evidence="13">
    <conflict type="erroneous initiation">
        <sequence resource="EMBL-CDS" id="BAA91788"/>
    </conflict>
    <text>Truncated N-terminus.</text>
</comment>
<accession>Q8WWK9</accession>
<accession>A2BDE0</accession>
<accession>A5YM58</accession>
<accession>B4DR35</accession>
<accession>E9PD90</accession>
<accession>Q3KRA5</accession>
<accession>Q5VXB4</accession>
<accession>Q8IWV5</accession>
<accession>Q8IWV6</accession>
<accession>Q96FH9</accession>
<accession>Q9H012</accession>
<accession>Q9H0D0</accession>
<accession>Q9H988</accession>
<accession>Q9HC49</accession>
<accession>Q9NVG4</accession>
<proteinExistence type="evidence at protein level"/>
<evidence type="ECO:0000250" key="1"/>
<evidence type="ECO:0000256" key="2">
    <source>
        <dbReference type="SAM" id="MobiDB-lite"/>
    </source>
</evidence>
<evidence type="ECO:0000269" key="3">
    <source>
    </source>
</evidence>
<evidence type="ECO:0000269" key="4">
    <source>
    </source>
</evidence>
<evidence type="ECO:0000269" key="5">
    <source>
    </source>
</evidence>
<evidence type="ECO:0000269" key="6">
    <source>
    </source>
</evidence>
<evidence type="ECO:0000269" key="7">
    <source>
    </source>
</evidence>
<evidence type="ECO:0000269" key="8">
    <source>
    </source>
</evidence>
<evidence type="ECO:0000269" key="9">
    <source>
    </source>
</evidence>
<evidence type="ECO:0000303" key="10">
    <source>
    </source>
</evidence>
<evidence type="ECO:0000303" key="11">
    <source>
    </source>
</evidence>
<evidence type="ECO:0000303" key="12">
    <source>
    </source>
</evidence>
<evidence type="ECO:0000305" key="13"/>
<evidence type="ECO:0000312" key="14">
    <source>
        <dbReference type="EMBL" id="AAG33675.1"/>
    </source>
</evidence>
<evidence type="ECO:0000312" key="15">
    <source>
        <dbReference type="EMBL" id="AAH10901.1"/>
    </source>
</evidence>
<evidence type="ECO:0000312" key="16">
    <source>
        <dbReference type="EMBL" id="AAI05807.1"/>
    </source>
</evidence>
<evidence type="ECO:0000312" key="17">
    <source>
        <dbReference type="EMBL" id="AAL47212.1"/>
    </source>
</evidence>
<evidence type="ECO:0000312" key="18">
    <source>
        <dbReference type="EMBL" id="BAB14345.1"/>
    </source>
</evidence>
<evidence type="ECO:0000312" key="19">
    <source>
        <dbReference type="EMBL" id="CAB66782.2"/>
    </source>
</evidence>
<evidence type="ECO:0000312" key="20">
    <source>
        <dbReference type="EMBL" id="CAC17466.1"/>
    </source>
</evidence>
<evidence type="ECO:0000312" key="21">
    <source>
        <dbReference type="EMBL" id="CAD22295.1"/>
    </source>
</evidence>
<evidence type="ECO:0000312" key="22">
    <source>
        <dbReference type="HGNC" id="HGNC:1990"/>
    </source>
</evidence>
<evidence type="ECO:0007744" key="23">
    <source>
    </source>
</evidence>
<evidence type="ECO:0007744" key="24">
    <source>
    </source>
</evidence>
<evidence type="ECO:0007744" key="25">
    <source>
    </source>
</evidence>
<evidence type="ECO:0007744" key="26">
    <source>
    </source>
</evidence>
<keyword id="KW-0025">Alternative splicing</keyword>
<keyword id="KW-0053">Apoptosis</keyword>
<keyword id="KW-0131">Cell cycle</keyword>
<keyword id="KW-0963">Cytoplasm</keyword>
<keyword id="KW-0206">Cytoskeleton</keyword>
<keyword id="KW-0493">Microtubule</keyword>
<keyword id="KW-0597">Phosphoprotein</keyword>
<keyword id="KW-1267">Proteomics identification</keyword>
<keyword id="KW-1185">Reference proteome</keyword>
<organism>
    <name type="scientific">Homo sapiens</name>
    <name type="common">Human</name>
    <dbReference type="NCBI Taxonomy" id="9606"/>
    <lineage>
        <taxon>Eukaryota</taxon>
        <taxon>Metazoa</taxon>
        <taxon>Chordata</taxon>
        <taxon>Craniata</taxon>
        <taxon>Vertebrata</taxon>
        <taxon>Euteleostomi</taxon>
        <taxon>Mammalia</taxon>
        <taxon>Eutheria</taxon>
        <taxon>Euarchontoglires</taxon>
        <taxon>Primates</taxon>
        <taxon>Haplorrhini</taxon>
        <taxon>Catarrhini</taxon>
        <taxon>Hominidae</taxon>
        <taxon>Homo</taxon>
    </lineage>
</organism>
<name>CKAP2_HUMAN</name>
<protein>
    <recommendedName>
        <fullName>Cytoskeleton-associated protein 2</fullName>
    </recommendedName>
    <alternativeName>
        <fullName>CTCL tumor antigen se20-10</fullName>
    </alternativeName>
    <alternativeName>
        <fullName>Tumor- and microtubule-associated protein</fullName>
    </alternativeName>
</protein>
<dbReference type="EMBL" id="Y15758">
    <property type="protein sequence ID" value="CAC17466.1"/>
    <property type="molecule type" value="mRNA"/>
</dbReference>
<dbReference type="EMBL" id="AJ429398">
    <property type="protein sequence ID" value="CAD22295.1"/>
    <property type="molecule type" value="Genomic_DNA"/>
</dbReference>
<dbReference type="EMBL" id="AY062261">
    <property type="protein sequence ID" value="AAL47212.1"/>
    <property type="molecule type" value="mRNA"/>
</dbReference>
<dbReference type="EMBL" id="AY062262">
    <property type="protein sequence ID" value="AAL47213.1"/>
    <property type="molecule type" value="mRNA"/>
</dbReference>
<dbReference type="EMBL" id="AK001611">
    <property type="protein sequence ID" value="BAA91788.1"/>
    <property type="status" value="ALT_INIT"/>
    <property type="molecule type" value="mRNA"/>
</dbReference>
<dbReference type="EMBL" id="AK022982">
    <property type="protein sequence ID" value="BAB14345.1"/>
    <property type="molecule type" value="mRNA"/>
</dbReference>
<dbReference type="EMBL" id="AK299083">
    <property type="protein sequence ID" value="BAG61147.1"/>
    <property type="molecule type" value="mRNA"/>
</dbReference>
<dbReference type="EMBL" id="EF560732">
    <property type="protein sequence ID" value="ABQ59042.1"/>
    <property type="molecule type" value="mRNA"/>
</dbReference>
<dbReference type="EMBL" id="AL359513">
    <property type="status" value="NOT_ANNOTATED_CDS"/>
    <property type="molecule type" value="Genomic_DNA"/>
</dbReference>
<dbReference type="EMBL" id="BC010901">
    <property type="protein sequence ID" value="AAH10901.1"/>
    <property type="status" value="ALT_INIT"/>
    <property type="molecule type" value="mRNA"/>
</dbReference>
<dbReference type="EMBL" id="BC105806">
    <property type="protein sequence ID" value="AAI05807.1"/>
    <property type="status" value="ALT_SEQ"/>
    <property type="molecule type" value="mRNA"/>
</dbReference>
<dbReference type="EMBL" id="BC130296">
    <property type="protein sequence ID" value="AAI30297.1"/>
    <property type="molecule type" value="mRNA"/>
</dbReference>
<dbReference type="EMBL" id="AF177227">
    <property type="protein sequence ID" value="AAG33675.1"/>
    <property type="status" value="ALT_FRAME"/>
    <property type="molecule type" value="mRNA"/>
</dbReference>
<dbReference type="EMBL" id="AL136848">
    <property type="protein sequence ID" value="CAB66782.2"/>
    <property type="molecule type" value="mRNA"/>
</dbReference>
<dbReference type="CCDS" id="CCDS41893.1">
    <molecule id="Q8WWK9-1"/>
</dbReference>
<dbReference type="CCDS" id="CCDS66557.1">
    <molecule id="Q8WWK9-6"/>
</dbReference>
<dbReference type="CCDS" id="CCDS73578.1">
    <molecule id="Q8WWK9-4"/>
</dbReference>
<dbReference type="CCDS" id="CCDS9435.1">
    <molecule id="Q8WWK9-5"/>
</dbReference>
<dbReference type="RefSeq" id="NP_001091995.1">
    <molecule id="Q8WWK9-1"/>
    <property type="nucleotide sequence ID" value="NM_001098525.3"/>
</dbReference>
<dbReference type="RefSeq" id="NP_001273615.1">
    <molecule id="Q8WWK9-6"/>
    <property type="nucleotide sequence ID" value="NM_001286686.2"/>
</dbReference>
<dbReference type="RefSeq" id="NP_001273616.1">
    <molecule id="Q8WWK9-4"/>
    <property type="nucleotide sequence ID" value="NM_001286687.2"/>
</dbReference>
<dbReference type="RefSeq" id="NP_060674.3">
    <molecule id="Q8WWK9-5"/>
    <property type="nucleotide sequence ID" value="NM_018204.4"/>
</dbReference>
<dbReference type="BioGRID" id="117755">
    <property type="interactions" value="135"/>
</dbReference>
<dbReference type="ELM" id="Q8WWK9"/>
<dbReference type="FunCoup" id="Q8WWK9">
    <property type="interactions" value="1027"/>
</dbReference>
<dbReference type="IntAct" id="Q8WWK9">
    <property type="interactions" value="86"/>
</dbReference>
<dbReference type="MINT" id="Q8WWK9"/>
<dbReference type="STRING" id="9606.ENSP00000367276"/>
<dbReference type="GlyGen" id="Q8WWK9">
    <property type="glycosylation" value="4 sites, 1 N-linked glycan (1 site), 1 O-linked glycan (3 sites)"/>
</dbReference>
<dbReference type="iPTMnet" id="Q8WWK9"/>
<dbReference type="PhosphoSitePlus" id="Q8WWK9"/>
<dbReference type="SwissPalm" id="Q8WWK9"/>
<dbReference type="BioMuta" id="CKAP2"/>
<dbReference type="DMDM" id="74751579"/>
<dbReference type="jPOST" id="Q8WWK9"/>
<dbReference type="MassIVE" id="Q8WWK9"/>
<dbReference type="PaxDb" id="9606-ENSP00000367276"/>
<dbReference type="PeptideAtlas" id="Q8WWK9"/>
<dbReference type="ProteomicsDB" id="19610"/>
<dbReference type="ProteomicsDB" id="74895">
    <molecule id="Q8WWK9-1"/>
</dbReference>
<dbReference type="Pumba" id="Q8WWK9"/>
<dbReference type="Antibodypedia" id="1993">
    <property type="antibodies" value="133 antibodies from 24 providers"/>
</dbReference>
<dbReference type="DNASU" id="26586"/>
<dbReference type="Ensembl" id="ENST00000258607.10">
    <molecule id="Q8WWK9-5"/>
    <property type="protein sequence ID" value="ENSP00000258607.5"/>
    <property type="gene ID" value="ENSG00000136108.15"/>
</dbReference>
<dbReference type="Ensembl" id="ENST00000378034.7">
    <molecule id="Q8WWK9-4"/>
    <property type="protein sequence ID" value="ENSP00000367273.2"/>
    <property type="gene ID" value="ENSG00000136108.15"/>
</dbReference>
<dbReference type="Ensembl" id="ENST00000378037.9">
    <molecule id="Q8WWK9-1"/>
    <property type="protein sequence ID" value="ENSP00000367276.4"/>
    <property type="gene ID" value="ENSG00000136108.15"/>
</dbReference>
<dbReference type="Ensembl" id="ENST00000490903.5">
    <molecule id="Q8WWK9-6"/>
    <property type="protein sequence ID" value="ENSP00000417830.1"/>
    <property type="gene ID" value="ENSG00000136108.15"/>
</dbReference>
<dbReference type="GeneID" id="26586"/>
<dbReference type="KEGG" id="hsa:26586"/>
<dbReference type="MANE-Select" id="ENST00000258607.10">
    <molecule id="Q8WWK9-5"/>
    <property type="protein sequence ID" value="ENSP00000258607.5"/>
    <property type="RefSeq nucleotide sequence ID" value="NM_018204.5"/>
    <property type="RefSeq protein sequence ID" value="NP_060674.3"/>
</dbReference>
<dbReference type="UCSC" id="uc001vgt.4">
    <molecule id="Q8WWK9-1"/>
    <property type="organism name" value="human"/>
</dbReference>
<dbReference type="AGR" id="HGNC:1990"/>
<dbReference type="CTD" id="26586"/>
<dbReference type="DisGeNET" id="26586"/>
<dbReference type="GeneCards" id="CKAP2"/>
<dbReference type="HGNC" id="HGNC:1990">
    <property type="gene designation" value="CKAP2"/>
</dbReference>
<dbReference type="HPA" id="ENSG00000136108">
    <property type="expression patterns" value="Tissue enhanced (bone)"/>
</dbReference>
<dbReference type="MIM" id="611569">
    <property type="type" value="gene"/>
</dbReference>
<dbReference type="neXtProt" id="NX_Q8WWK9"/>
<dbReference type="OpenTargets" id="ENSG00000136108"/>
<dbReference type="PharmGKB" id="PA26526"/>
<dbReference type="VEuPathDB" id="HostDB:ENSG00000136108"/>
<dbReference type="eggNOG" id="ENOG502RUSI">
    <property type="taxonomic scope" value="Eukaryota"/>
</dbReference>
<dbReference type="GeneTree" id="ENSGT00530000063691"/>
<dbReference type="HOGENOM" id="CLU_026552_0_0_1"/>
<dbReference type="InParanoid" id="Q8WWK9"/>
<dbReference type="OMA" id="HEPEGQN"/>
<dbReference type="OrthoDB" id="9945093at2759"/>
<dbReference type="PAN-GO" id="Q8WWK9">
    <property type="GO annotations" value="2 GO annotations based on evolutionary models"/>
</dbReference>
<dbReference type="PhylomeDB" id="Q8WWK9"/>
<dbReference type="TreeFam" id="TF333003"/>
<dbReference type="PathwayCommons" id="Q8WWK9"/>
<dbReference type="SignaLink" id="Q8WWK9"/>
<dbReference type="SIGNOR" id="Q8WWK9"/>
<dbReference type="BioGRID-ORCS" id="26586">
    <property type="hits" value="51 hits in 1166 CRISPR screens"/>
</dbReference>
<dbReference type="CD-CODE" id="8C2F96ED">
    <property type="entry name" value="Centrosome"/>
</dbReference>
<dbReference type="ChiTaRS" id="CKAP2">
    <property type="organism name" value="human"/>
</dbReference>
<dbReference type="GeneWiki" id="CKAP2"/>
<dbReference type="GenomeRNAi" id="26586"/>
<dbReference type="Pharos" id="Q8WWK9">
    <property type="development level" value="Tbio"/>
</dbReference>
<dbReference type="PRO" id="PR:Q8WWK9"/>
<dbReference type="Proteomes" id="UP000005640">
    <property type="component" value="Chromosome 13"/>
</dbReference>
<dbReference type="RNAct" id="Q8WWK9">
    <property type="molecule type" value="protein"/>
</dbReference>
<dbReference type="Bgee" id="ENSG00000136108">
    <property type="expression patterns" value="Expressed in ventricular zone and 179 other cell types or tissues"/>
</dbReference>
<dbReference type="ExpressionAtlas" id="Q8WWK9">
    <property type="expression patterns" value="baseline and differential"/>
</dbReference>
<dbReference type="GO" id="GO:0005813">
    <property type="term" value="C:centrosome"/>
    <property type="evidence" value="ECO:0000314"/>
    <property type="project" value="HPA"/>
</dbReference>
<dbReference type="GO" id="GO:0036064">
    <property type="term" value="C:ciliary basal body"/>
    <property type="evidence" value="ECO:0000314"/>
    <property type="project" value="HPA"/>
</dbReference>
<dbReference type="GO" id="GO:0005929">
    <property type="term" value="C:cilium"/>
    <property type="evidence" value="ECO:0000314"/>
    <property type="project" value="HPA"/>
</dbReference>
<dbReference type="GO" id="GO:0005737">
    <property type="term" value="C:cytoplasm"/>
    <property type="evidence" value="ECO:0007669"/>
    <property type="project" value="UniProtKB-KW"/>
</dbReference>
<dbReference type="GO" id="GO:0043231">
    <property type="term" value="C:intracellular membrane-bounded organelle"/>
    <property type="evidence" value="ECO:0000314"/>
    <property type="project" value="HPA"/>
</dbReference>
<dbReference type="GO" id="GO:0005874">
    <property type="term" value="C:microtubule"/>
    <property type="evidence" value="ECO:0007669"/>
    <property type="project" value="UniProtKB-KW"/>
</dbReference>
<dbReference type="GO" id="GO:0015630">
    <property type="term" value="C:microtubule cytoskeleton"/>
    <property type="evidence" value="ECO:0000314"/>
    <property type="project" value="HPA"/>
</dbReference>
<dbReference type="GO" id="GO:0072686">
    <property type="term" value="C:mitotic spindle"/>
    <property type="evidence" value="ECO:0000314"/>
    <property type="project" value="HPA"/>
</dbReference>
<dbReference type="GO" id="GO:0005730">
    <property type="term" value="C:nucleolus"/>
    <property type="evidence" value="ECO:0000314"/>
    <property type="project" value="HPA"/>
</dbReference>
<dbReference type="GO" id="GO:0000922">
    <property type="term" value="C:spindle pole"/>
    <property type="evidence" value="ECO:0007669"/>
    <property type="project" value="UniProtKB-SubCell"/>
</dbReference>
<dbReference type="GO" id="GO:0006915">
    <property type="term" value="P:apoptotic process"/>
    <property type="evidence" value="ECO:0007669"/>
    <property type="project" value="UniProtKB-KW"/>
</dbReference>
<dbReference type="GO" id="GO:0000281">
    <property type="term" value="P:mitotic cytokinesis"/>
    <property type="evidence" value="ECO:0000316"/>
    <property type="project" value="MGI"/>
</dbReference>
<dbReference type="GO" id="GO:0007026">
    <property type="term" value="P:negative regulation of microtubule depolymerization"/>
    <property type="evidence" value="ECO:0000318"/>
    <property type="project" value="GO_Central"/>
</dbReference>
<dbReference type="GO" id="GO:0045944">
    <property type="term" value="P:positive regulation of transcription by RNA polymerase II"/>
    <property type="evidence" value="ECO:0000316"/>
    <property type="project" value="MGI"/>
</dbReference>
<dbReference type="InterPro" id="IPR029197">
    <property type="entry name" value="CKAP2_C"/>
</dbReference>
<dbReference type="InterPro" id="IPR026165">
    <property type="entry name" value="CKAP2_fam"/>
</dbReference>
<dbReference type="PANTHER" id="PTHR16076">
    <property type="entry name" value="CYTOSKELETON ASSOCIATED PROTEIN 2-RELATED"/>
    <property type="match status" value="1"/>
</dbReference>
<dbReference type="PANTHER" id="PTHR16076:SF8">
    <property type="entry name" value="CYTOSKELETON-ASSOCIATED PROTEIN 2"/>
    <property type="match status" value="1"/>
</dbReference>
<dbReference type="Pfam" id="PF15297">
    <property type="entry name" value="CKAP2_C"/>
    <property type="match status" value="1"/>
</dbReference>
<sequence>MSTPAVPQDLQLPPSQRAQSAFKEQRRQKLKEHLLRRKTLFAYKQENEMLSSSRDQRVVTSEDQVQEGTKVLKLKTKMADKENMKRPAESKNNTVVGKHCIPLKPSNELTNSTVVIDTHKPKDSNQTPHLLLTEDDPQSQHMTLSQAFHLKNNSKKKQMTTEKQKQDANMPKKPVLGSYRGQIVQSKINSFRKPLQVKDESSAATKKLSATIPKATKPQPVNTSSVTVKSNRSSNMTATTKFVSTTSQNTQLVRPPIRSHHSNTRDTVKQGISRTSANVTIRKGPHEKELLQSKTALSSVKTSSSQGIIRNKTLSRSIASEVIARPASLSNDKLMEKSEPVDQRRHTAGKAIVDSRSAQPKETSEERKARLSEWKAGKGRVLKRPPNSVVTQHEPAGQNEKPVGSFWTTMAEEDEQRLFTEKVNNTFSECLNLINEGCPKEDILVTLNDLIKNIPDAKKLVKYWICLALIEPITSPIENIIAIYEKAILAGAQPIEEMRHTIVDILTMKSQEKANLGENMEKSCASKEEVKEVSIEDTGVDVDPEKLEMESKLHRNLLFQDCEKEQDNKTKDPTHDVKTPNTETRTSCLIKYNVSTTPYLQSVKKKVQFDGTNSAFKELKFLTPVRRSRRLQEKTSKLPDMLKDHYPCVSSLEQLTELGRETDAFVCRPNAALCRVYYEADTT</sequence>